<organism>
    <name type="scientific">Vibrio cholerae serotype O1 (strain ATCC 39315 / El Tor Inaba N16961)</name>
    <dbReference type="NCBI Taxonomy" id="243277"/>
    <lineage>
        <taxon>Bacteria</taxon>
        <taxon>Pseudomonadati</taxon>
        <taxon>Pseudomonadota</taxon>
        <taxon>Gammaproteobacteria</taxon>
        <taxon>Vibrionales</taxon>
        <taxon>Vibrionaceae</taxon>
        <taxon>Vibrio</taxon>
    </lineage>
</organism>
<evidence type="ECO:0000255" key="1">
    <source>
        <dbReference type="HAMAP-Rule" id="MF_01043"/>
    </source>
</evidence>
<proteinExistence type="inferred from homology"/>
<sequence length="208" mass="22476">MTPLALSMIIFAYLLGSISSAVLICRVLRLPDPRNVGSQNPGATNVLRIGGKKAAVAVLLCDMLKGTIPVWGGYFLNIEPFMLGLVAIAACLGHMYPIFFHFKGGKGVATALGAIAPIGLDLTAMVMATWLVVVVLFRYSSLAALVTVLLAPLYTWLIKPQYTLPVAMLCCLIVLRHHQNVKRLFAGTEPKVGEKNKKPSDDEESRVV</sequence>
<feature type="chain" id="PRO_0000188485" description="Glycerol-3-phosphate acyltransferase">
    <location>
        <begin position="1"/>
        <end position="208"/>
    </location>
</feature>
<feature type="transmembrane region" description="Helical" evidence="1">
    <location>
        <begin position="4"/>
        <end position="24"/>
    </location>
</feature>
<feature type="transmembrane region" description="Helical" evidence="1">
    <location>
        <begin position="56"/>
        <end position="76"/>
    </location>
</feature>
<feature type="transmembrane region" description="Helical" evidence="1">
    <location>
        <begin position="80"/>
        <end position="100"/>
    </location>
</feature>
<feature type="transmembrane region" description="Helical" evidence="1">
    <location>
        <begin position="117"/>
        <end position="137"/>
    </location>
</feature>
<feature type="transmembrane region" description="Helical" evidence="1">
    <location>
        <begin position="139"/>
        <end position="159"/>
    </location>
</feature>
<protein>
    <recommendedName>
        <fullName evidence="1">Glycerol-3-phosphate acyltransferase</fullName>
    </recommendedName>
    <alternativeName>
        <fullName evidence="1">Acyl-PO4 G3P acyltransferase</fullName>
    </alternativeName>
    <alternativeName>
        <fullName evidence="1">Acyl-phosphate--glycerol-3-phosphate acyltransferase</fullName>
    </alternativeName>
    <alternativeName>
        <fullName evidence="1">G3P acyltransferase</fullName>
        <shortName evidence="1">GPAT</shortName>
        <ecNumber evidence="1">2.3.1.275</ecNumber>
    </alternativeName>
    <alternativeName>
        <fullName evidence="1">Lysophosphatidic acid synthase</fullName>
        <shortName evidence="1">LPA synthase</shortName>
    </alternativeName>
</protein>
<name>PLSY_VIBCH</name>
<comment type="function">
    <text evidence="1">Catalyzes the transfer of an acyl group from acyl-phosphate (acyl-PO(4)) to glycerol-3-phosphate (G3P) to form lysophosphatidic acid (LPA). This enzyme utilizes acyl-phosphate as fatty acyl donor, but not acyl-CoA or acyl-ACP.</text>
</comment>
<comment type="catalytic activity">
    <reaction evidence="1">
        <text>an acyl phosphate + sn-glycerol 3-phosphate = a 1-acyl-sn-glycero-3-phosphate + phosphate</text>
        <dbReference type="Rhea" id="RHEA:34075"/>
        <dbReference type="ChEBI" id="CHEBI:43474"/>
        <dbReference type="ChEBI" id="CHEBI:57597"/>
        <dbReference type="ChEBI" id="CHEBI:57970"/>
        <dbReference type="ChEBI" id="CHEBI:59918"/>
        <dbReference type="EC" id="2.3.1.275"/>
    </reaction>
</comment>
<comment type="pathway">
    <text evidence="1">Lipid metabolism; phospholipid metabolism.</text>
</comment>
<comment type="subunit">
    <text evidence="1">Probably interacts with PlsX.</text>
</comment>
<comment type="subcellular location">
    <subcellularLocation>
        <location evidence="1">Cell inner membrane</location>
        <topology evidence="1">Multi-pass membrane protein</topology>
    </subcellularLocation>
</comment>
<comment type="similarity">
    <text evidence="1">Belongs to the PlsY family.</text>
</comment>
<dbReference type="EC" id="2.3.1.275" evidence="1"/>
<dbReference type="EMBL" id="AE003852">
    <property type="protein sequence ID" value="AAF93691.1"/>
    <property type="molecule type" value="Genomic_DNA"/>
</dbReference>
<dbReference type="PIR" id="B82313">
    <property type="entry name" value="B82313"/>
</dbReference>
<dbReference type="RefSeq" id="NP_230174.1">
    <property type="nucleotide sequence ID" value="NC_002505.1"/>
</dbReference>
<dbReference type="RefSeq" id="WP_000188027.1">
    <property type="nucleotide sequence ID" value="NZ_LT906614.1"/>
</dbReference>
<dbReference type="SMR" id="Q9KUJ7"/>
<dbReference type="STRING" id="243277.VC_0523"/>
<dbReference type="DNASU" id="2615814"/>
<dbReference type="EnsemblBacteria" id="AAF93691">
    <property type="protein sequence ID" value="AAF93691"/>
    <property type="gene ID" value="VC_0523"/>
</dbReference>
<dbReference type="KEGG" id="vch:VC_0523"/>
<dbReference type="PATRIC" id="fig|243277.26.peg.499"/>
<dbReference type="eggNOG" id="COG0344">
    <property type="taxonomic scope" value="Bacteria"/>
</dbReference>
<dbReference type="HOGENOM" id="CLU_081254_0_2_6"/>
<dbReference type="UniPathway" id="UPA00085"/>
<dbReference type="Proteomes" id="UP000000584">
    <property type="component" value="Chromosome 1"/>
</dbReference>
<dbReference type="GO" id="GO:0005886">
    <property type="term" value="C:plasma membrane"/>
    <property type="evidence" value="ECO:0000318"/>
    <property type="project" value="GO_Central"/>
</dbReference>
<dbReference type="GO" id="GO:0043772">
    <property type="term" value="F:acyl-phosphate glycerol-3-phosphate acyltransferase activity"/>
    <property type="evidence" value="ECO:0007669"/>
    <property type="project" value="UniProtKB-UniRule"/>
</dbReference>
<dbReference type="GO" id="GO:0008654">
    <property type="term" value="P:phospholipid biosynthetic process"/>
    <property type="evidence" value="ECO:0007669"/>
    <property type="project" value="UniProtKB-UniRule"/>
</dbReference>
<dbReference type="HAMAP" id="MF_01043">
    <property type="entry name" value="PlsY"/>
    <property type="match status" value="1"/>
</dbReference>
<dbReference type="InterPro" id="IPR003811">
    <property type="entry name" value="G3P_acylTferase_PlsY"/>
</dbReference>
<dbReference type="NCBIfam" id="TIGR00023">
    <property type="entry name" value="glycerol-3-phosphate 1-O-acyltransferase PlsY"/>
    <property type="match status" value="1"/>
</dbReference>
<dbReference type="PANTHER" id="PTHR30309:SF0">
    <property type="entry name" value="GLYCEROL-3-PHOSPHATE ACYLTRANSFERASE-RELATED"/>
    <property type="match status" value="1"/>
</dbReference>
<dbReference type="PANTHER" id="PTHR30309">
    <property type="entry name" value="INNER MEMBRANE PROTEIN YGIH"/>
    <property type="match status" value="1"/>
</dbReference>
<dbReference type="Pfam" id="PF02660">
    <property type="entry name" value="G3P_acyltransf"/>
    <property type="match status" value="1"/>
</dbReference>
<dbReference type="SMART" id="SM01207">
    <property type="entry name" value="G3P_acyltransf"/>
    <property type="match status" value="1"/>
</dbReference>
<gene>
    <name evidence="1" type="primary">plsY</name>
    <name type="ordered locus">VC_0523</name>
</gene>
<accession>Q9KUJ7</accession>
<reference key="1">
    <citation type="journal article" date="2000" name="Nature">
        <title>DNA sequence of both chromosomes of the cholera pathogen Vibrio cholerae.</title>
        <authorList>
            <person name="Heidelberg J.F."/>
            <person name="Eisen J.A."/>
            <person name="Nelson W.C."/>
            <person name="Clayton R.A."/>
            <person name="Gwinn M.L."/>
            <person name="Dodson R.J."/>
            <person name="Haft D.H."/>
            <person name="Hickey E.K."/>
            <person name="Peterson J.D."/>
            <person name="Umayam L.A."/>
            <person name="Gill S.R."/>
            <person name="Nelson K.E."/>
            <person name="Read T.D."/>
            <person name="Tettelin H."/>
            <person name="Richardson D.L."/>
            <person name="Ermolaeva M.D."/>
            <person name="Vamathevan J.J."/>
            <person name="Bass S."/>
            <person name="Qin H."/>
            <person name="Dragoi I."/>
            <person name="Sellers P."/>
            <person name="McDonald L.A."/>
            <person name="Utterback T.R."/>
            <person name="Fleischmann R.D."/>
            <person name="Nierman W.C."/>
            <person name="White O."/>
            <person name="Salzberg S.L."/>
            <person name="Smith H.O."/>
            <person name="Colwell R.R."/>
            <person name="Mekalanos J.J."/>
            <person name="Venter J.C."/>
            <person name="Fraser C.M."/>
        </authorList>
    </citation>
    <scope>NUCLEOTIDE SEQUENCE [LARGE SCALE GENOMIC DNA]</scope>
    <source>
        <strain>ATCC 39315 / El Tor Inaba N16961</strain>
    </source>
</reference>
<keyword id="KW-0997">Cell inner membrane</keyword>
<keyword id="KW-1003">Cell membrane</keyword>
<keyword id="KW-0444">Lipid biosynthesis</keyword>
<keyword id="KW-0443">Lipid metabolism</keyword>
<keyword id="KW-0472">Membrane</keyword>
<keyword id="KW-0594">Phospholipid biosynthesis</keyword>
<keyword id="KW-1208">Phospholipid metabolism</keyword>
<keyword id="KW-1185">Reference proteome</keyword>
<keyword id="KW-0808">Transferase</keyword>
<keyword id="KW-0812">Transmembrane</keyword>
<keyword id="KW-1133">Transmembrane helix</keyword>